<sequence>MSSSNEQICLDEDWIQKFGDREIEFVDEAQKSEVDETEKSIKRFPLSVLQRKGLALINLRIGVVKTGFGGKTIIDFEKDPAFSNGEELPANSFSPGDVVSIRQDFQSSKKKRPNETDISVEGVVTRVHERHISVALKSEEDIPSSVTRLSVVKLVNRVTYERMRHTMLEFKRSIPEYRNSLFYTLIGRKKADVSIDQKLIGDIKYFNKELNASQKKAVKFSIAVKELSLIHGPPGTGKTHTLVEIIQQLVLRNKRILVCGASNLAVDNIVDRLSSSGIPMVRLGHPARLLPSILDHSLDVLSRTGDNGDVIRGISEDIDVCLSKITKTKNGRERREIYKNIRELRKDYRKYEAKTVANIVSASKVVFCTLHGAGSRQLKGQRFDAVIIDEASQALEPQCWIPLLGMNKVILAGDHMQLSPNVQSKRPYISMFERLVKSQGDLVKCFLNIQYRMHELISKFPSDTFYDSKLVPAEEVKKRLLMDLENVEETELTDSPIYFYDTLGNYQEDDRSEDMQNFYQDSKSNHWEAQIVSYHISGLLEAGLEAKDIAVVTPYNAQVALIRQLLKEKGIEVEMGSVDKVQGREKEAIIFSLVRSNDVREVGFLAEKRRLNVAITRPKRHLCVIGDSNTVKWASEFFHQWVDFLEENAIVMDIDATMFE</sequence>
<comment type="function">
    <text evidence="1">DNA polymerase alpha-associated DNA helicase which may be involved in DNA replication.</text>
</comment>
<comment type="catalytic activity">
    <reaction>
        <text>ATP + H2O = ADP + phosphate + H(+)</text>
        <dbReference type="Rhea" id="RHEA:13065"/>
        <dbReference type="ChEBI" id="CHEBI:15377"/>
        <dbReference type="ChEBI" id="CHEBI:15378"/>
        <dbReference type="ChEBI" id="CHEBI:30616"/>
        <dbReference type="ChEBI" id="CHEBI:43474"/>
        <dbReference type="ChEBI" id="CHEBI:456216"/>
        <dbReference type="EC" id="3.6.4.12"/>
    </reaction>
</comment>
<comment type="subunit">
    <text evidence="1">Associates with the hexameric DNA polymerase alpha.</text>
</comment>
<comment type="subcellular location">
    <subcellularLocation>
        <location>Cytoplasm</location>
    </subcellularLocation>
    <subcellularLocation>
        <location>Nucleus</location>
    </subcellularLocation>
</comment>
<comment type="similarity">
    <text evidence="2">Belongs to the DNA2/NAM7 helicase family.</text>
</comment>
<keyword id="KW-0067">ATP-binding</keyword>
<keyword id="KW-0963">Cytoplasm</keyword>
<keyword id="KW-0347">Helicase</keyword>
<keyword id="KW-0378">Hydrolase</keyword>
<keyword id="KW-0547">Nucleotide-binding</keyword>
<keyword id="KW-0539">Nucleus</keyword>
<keyword id="KW-1185">Reference proteome</keyword>
<reference key="1">
    <citation type="journal article" date="2002" name="Nature">
        <title>The genome sequence of Schizosaccharomyces pombe.</title>
        <authorList>
            <person name="Wood V."/>
            <person name="Gwilliam R."/>
            <person name="Rajandream M.A."/>
            <person name="Lyne M.H."/>
            <person name="Lyne R."/>
            <person name="Stewart A."/>
            <person name="Sgouros J.G."/>
            <person name="Peat N."/>
            <person name="Hayles J."/>
            <person name="Baker S.G."/>
            <person name="Basham D."/>
            <person name="Bowman S."/>
            <person name="Brooks K."/>
            <person name="Brown D."/>
            <person name="Brown S."/>
            <person name="Chillingworth T."/>
            <person name="Churcher C.M."/>
            <person name="Collins M."/>
            <person name="Connor R."/>
            <person name="Cronin A."/>
            <person name="Davis P."/>
            <person name="Feltwell T."/>
            <person name="Fraser A."/>
            <person name="Gentles S."/>
            <person name="Goble A."/>
            <person name="Hamlin N."/>
            <person name="Harris D.E."/>
            <person name="Hidalgo J."/>
            <person name="Hodgson G."/>
            <person name="Holroyd S."/>
            <person name="Hornsby T."/>
            <person name="Howarth S."/>
            <person name="Huckle E.J."/>
            <person name="Hunt S."/>
            <person name="Jagels K."/>
            <person name="James K.D."/>
            <person name="Jones L."/>
            <person name="Jones M."/>
            <person name="Leather S."/>
            <person name="McDonald S."/>
            <person name="McLean J."/>
            <person name="Mooney P."/>
            <person name="Moule S."/>
            <person name="Mungall K.L."/>
            <person name="Murphy L.D."/>
            <person name="Niblett D."/>
            <person name="Odell C."/>
            <person name="Oliver K."/>
            <person name="O'Neil S."/>
            <person name="Pearson D."/>
            <person name="Quail M.A."/>
            <person name="Rabbinowitsch E."/>
            <person name="Rutherford K.M."/>
            <person name="Rutter S."/>
            <person name="Saunders D."/>
            <person name="Seeger K."/>
            <person name="Sharp S."/>
            <person name="Skelton J."/>
            <person name="Simmonds M.N."/>
            <person name="Squares R."/>
            <person name="Squares S."/>
            <person name="Stevens K."/>
            <person name="Taylor K."/>
            <person name="Taylor R.G."/>
            <person name="Tivey A."/>
            <person name="Walsh S.V."/>
            <person name="Warren T."/>
            <person name="Whitehead S."/>
            <person name="Woodward J.R."/>
            <person name="Volckaert G."/>
            <person name="Aert R."/>
            <person name="Robben J."/>
            <person name="Grymonprez B."/>
            <person name="Weltjens I."/>
            <person name="Vanstreels E."/>
            <person name="Rieger M."/>
            <person name="Schaefer M."/>
            <person name="Mueller-Auer S."/>
            <person name="Gabel C."/>
            <person name="Fuchs M."/>
            <person name="Duesterhoeft A."/>
            <person name="Fritzc C."/>
            <person name="Holzer E."/>
            <person name="Moestl D."/>
            <person name="Hilbert H."/>
            <person name="Borzym K."/>
            <person name="Langer I."/>
            <person name="Beck A."/>
            <person name="Lehrach H."/>
            <person name="Reinhardt R."/>
            <person name="Pohl T.M."/>
            <person name="Eger P."/>
            <person name="Zimmermann W."/>
            <person name="Wedler H."/>
            <person name="Wambutt R."/>
            <person name="Purnelle B."/>
            <person name="Goffeau A."/>
            <person name="Cadieu E."/>
            <person name="Dreano S."/>
            <person name="Gloux S."/>
            <person name="Lelaure V."/>
            <person name="Mottier S."/>
            <person name="Galibert F."/>
            <person name="Aves S.J."/>
            <person name="Xiang Z."/>
            <person name="Hunt C."/>
            <person name="Moore K."/>
            <person name="Hurst S.M."/>
            <person name="Lucas M."/>
            <person name="Rochet M."/>
            <person name="Gaillardin C."/>
            <person name="Tallada V.A."/>
            <person name="Garzon A."/>
            <person name="Thode G."/>
            <person name="Daga R.R."/>
            <person name="Cruzado L."/>
            <person name="Jimenez J."/>
            <person name="Sanchez M."/>
            <person name="del Rey F."/>
            <person name="Benito J."/>
            <person name="Dominguez A."/>
            <person name="Revuelta J.L."/>
            <person name="Moreno S."/>
            <person name="Armstrong J."/>
            <person name="Forsburg S.L."/>
            <person name="Cerutti L."/>
            <person name="Lowe T."/>
            <person name="McCombie W.R."/>
            <person name="Paulsen I."/>
            <person name="Potashkin J."/>
            <person name="Shpakovski G.V."/>
            <person name="Ussery D."/>
            <person name="Barrell B.G."/>
            <person name="Nurse P."/>
        </authorList>
    </citation>
    <scope>NUCLEOTIDE SEQUENCE [LARGE SCALE GENOMIC DNA]</scope>
    <source>
        <strain>972 / ATCC 24843</strain>
    </source>
</reference>
<organism>
    <name type="scientific">Schizosaccharomyces pombe (strain 972 / ATCC 24843)</name>
    <name type="common">Fission yeast</name>
    <dbReference type="NCBI Taxonomy" id="284812"/>
    <lineage>
        <taxon>Eukaryota</taxon>
        <taxon>Fungi</taxon>
        <taxon>Dikarya</taxon>
        <taxon>Ascomycota</taxon>
        <taxon>Taphrinomycotina</taxon>
        <taxon>Schizosaccharomycetes</taxon>
        <taxon>Schizosaccharomycetales</taxon>
        <taxon>Schizosaccharomycetaceae</taxon>
        <taxon>Schizosaccharomyces</taxon>
    </lineage>
</organism>
<proteinExistence type="inferred from homology"/>
<dbReference type="EC" id="3.6.4.12"/>
<dbReference type="EMBL" id="CU329672">
    <property type="protein sequence ID" value="CAA20863.1"/>
    <property type="molecule type" value="Genomic_DNA"/>
</dbReference>
<dbReference type="PIR" id="T41580">
    <property type="entry name" value="T41580"/>
</dbReference>
<dbReference type="RefSeq" id="NP_588369.1">
    <property type="nucleotide sequence ID" value="NM_001023360.2"/>
</dbReference>
<dbReference type="SMR" id="O94247"/>
<dbReference type="BioGRID" id="275977">
    <property type="interactions" value="9"/>
</dbReference>
<dbReference type="FunCoup" id="O94247">
    <property type="interactions" value="247"/>
</dbReference>
<dbReference type="STRING" id="284812.O94247"/>
<dbReference type="iPTMnet" id="O94247"/>
<dbReference type="PaxDb" id="4896-SPCC737.07c.1"/>
<dbReference type="EnsemblFungi" id="SPCC737.07c.1">
    <property type="protein sequence ID" value="SPCC737.07c.1:pep"/>
    <property type="gene ID" value="SPCC737.07c"/>
</dbReference>
<dbReference type="KEGG" id="spo:2539412"/>
<dbReference type="PomBase" id="SPCC737.07c"/>
<dbReference type="VEuPathDB" id="FungiDB:SPCC737.07c"/>
<dbReference type="eggNOG" id="KOG1803">
    <property type="taxonomic scope" value="Eukaryota"/>
</dbReference>
<dbReference type="HOGENOM" id="CLU_001666_8_2_1"/>
<dbReference type="InParanoid" id="O94247"/>
<dbReference type="OMA" id="TIIHGPP"/>
<dbReference type="PhylomeDB" id="O94247"/>
<dbReference type="PRO" id="PR:O94247"/>
<dbReference type="Proteomes" id="UP000002485">
    <property type="component" value="Chromosome III"/>
</dbReference>
<dbReference type="GO" id="GO:0005829">
    <property type="term" value="C:cytosol"/>
    <property type="evidence" value="ECO:0007005"/>
    <property type="project" value="PomBase"/>
</dbReference>
<dbReference type="GO" id="GO:0033203">
    <property type="term" value="C:DNA helicase A complex"/>
    <property type="evidence" value="ECO:0000266"/>
    <property type="project" value="PomBase"/>
</dbReference>
<dbReference type="GO" id="GO:0043596">
    <property type="term" value="C:nuclear replication fork"/>
    <property type="evidence" value="ECO:0000305"/>
    <property type="project" value="PomBase"/>
</dbReference>
<dbReference type="GO" id="GO:0005634">
    <property type="term" value="C:nucleus"/>
    <property type="evidence" value="ECO:0007005"/>
    <property type="project" value="PomBase"/>
</dbReference>
<dbReference type="GO" id="GO:0043139">
    <property type="term" value="F:5'-3' DNA helicase activity"/>
    <property type="evidence" value="ECO:0000318"/>
    <property type="project" value="GO_Central"/>
</dbReference>
<dbReference type="GO" id="GO:0005524">
    <property type="term" value="F:ATP binding"/>
    <property type="evidence" value="ECO:0007669"/>
    <property type="project" value="UniProtKB-KW"/>
</dbReference>
<dbReference type="GO" id="GO:0016887">
    <property type="term" value="F:ATP hydrolysis activity"/>
    <property type="evidence" value="ECO:0000250"/>
    <property type="project" value="UniProtKB"/>
</dbReference>
<dbReference type="GO" id="GO:0036121">
    <property type="term" value="F:double-stranded DNA helicase activity"/>
    <property type="evidence" value="ECO:0000250"/>
    <property type="project" value="UniProtKB"/>
</dbReference>
<dbReference type="GO" id="GO:0003723">
    <property type="term" value="F:RNA binding"/>
    <property type="evidence" value="ECO:0007669"/>
    <property type="project" value="InterPro"/>
</dbReference>
<dbReference type="GO" id="GO:0003697">
    <property type="term" value="F:single-stranded DNA binding"/>
    <property type="evidence" value="ECO:0000250"/>
    <property type="project" value="UniProtKB"/>
</dbReference>
<dbReference type="GO" id="GO:1903459">
    <property type="term" value="P:mitotic DNA replication lagging strand elongation"/>
    <property type="evidence" value="ECO:0000266"/>
    <property type="project" value="PomBase"/>
</dbReference>
<dbReference type="CDD" id="cd18044">
    <property type="entry name" value="DEXXQc_SMUBP2"/>
    <property type="match status" value="1"/>
</dbReference>
<dbReference type="CDD" id="cd18808">
    <property type="entry name" value="SF1_C_Upf1"/>
    <property type="match status" value="1"/>
</dbReference>
<dbReference type="FunFam" id="3.40.50.300:FF:000326">
    <property type="entry name" value="P-loop containing nucleoside triphosphate hydrolase"/>
    <property type="match status" value="1"/>
</dbReference>
<dbReference type="Gene3D" id="2.40.30.270">
    <property type="match status" value="1"/>
</dbReference>
<dbReference type="Gene3D" id="3.40.50.300">
    <property type="entry name" value="P-loop containing nucleotide triphosphate hydrolases"/>
    <property type="match status" value="2"/>
</dbReference>
<dbReference type="InterPro" id="IPR003593">
    <property type="entry name" value="AAA+_ATPase"/>
</dbReference>
<dbReference type="InterPro" id="IPR050534">
    <property type="entry name" value="Coronavir_polyprotein_1ab"/>
</dbReference>
<dbReference type="InterPro" id="IPR041679">
    <property type="entry name" value="DNA2/NAM7-like_C"/>
</dbReference>
<dbReference type="InterPro" id="IPR041677">
    <property type="entry name" value="DNA2/NAM7_AAA_11"/>
</dbReference>
<dbReference type="InterPro" id="IPR027417">
    <property type="entry name" value="P-loop_NTPase"/>
</dbReference>
<dbReference type="InterPro" id="IPR047187">
    <property type="entry name" value="SF1_C_Upf1"/>
</dbReference>
<dbReference type="InterPro" id="IPR048761">
    <property type="entry name" value="SMUBP-2_HCS1_1B"/>
</dbReference>
<dbReference type="PANTHER" id="PTHR43788:SF8">
    <property type="entry name" value="DNA-BINDING PROTEIN SMUBP-2"/>
    <property type="match status" value="1"/>
</dbReference>
<dbReference type="PANTHER" id="PTHR43788">
    <property type="entry name" value="DNA2/NAM7 HELICASE FAMILY MEMBER"/>
    <property type="match status" value="1"/>
</dbReference>
<dbReference type="Pfam" id="PF13086">
    <property type="entry name" value="AAA_11"/>
    <property type="match status" value="1"/>
</dbReference>
<dbReference type="Pfam" id="PF13087">
    <property type="entry name" value="AAA_12"/>
    <property type="match status" value="1"/>
</dbReference>
<dbReference type="Pfam" id="PF21138">
    <property type="entry name" value="SMUBP-2_HCS1_1B"/>
    <property type="match status" value="1"/>
</dbReference>
<dbReference type="SMART" id="SM00382">
    <property type="entry name" value="AAA"/>
    <property type="match status" value="1"/>
</dbReference>
<dbReference type="SUPFAM" id="SSF52540">
    <property type="entry name" value="P-loop containing nucleoside triphosphate hydrolases"/>
    <property type="match status" value="1"/>
</dbReference>
<gene>
    <name type="primary">hcs1</name>
    <name type="ORF">SPCC737.07c</name>
</gene>
<accession>O94247</accession>
<evidence type="ECO:0000250" key="1"/>
<evidence type="ECO:0000305" key="2"/>
<name>HCS1_SCHPO</name>
<feature type="chain" id="PRO_0000353816" description="DNA polymerase alpha-associated DNA helicase A">
    <location>
        <begin position="1"/>
        <end position="660"/>
    </location>
</feature>
<feature type="binding site" evidence="1">
    <location>
        <begin position="232"/>
        <end position="239"/>
    </location>
    <ligand>
        <name>ATP</name>
        <dbReference type="ChEBI" id="CHEBI:30616"/>
    </ligand>
</feature>
<protein>
    <recommendedName>
        <fullName>DNA polymerase alpha-associated DNA helicase A</fullName>
        <ecNumber>3.6.4.12</ecNumber>
    </recommendedName>
</protein>